<evidence type="ECO:0000255" key="1">
    <source>
        <dbReference type="HAMAP-Rule" id="MF_01522"/>
    </source>
</evidence>
<feature type="chain" id="PRO_0000296767" description="Probable potassium transport system protein Kup">
    <location>
        <begin position="1"/>
        <end position="625"/>
    </location>
</feature>
<feature type="transmembrane region" description="Helical" evidence="1">
    <location>
        <begin position="10"/>
        <end position="30"/>
    </location>
</feature>
<feature type="transmembrane region" description="Helical" evidence="1">
    <location>
        <begin position="50"/>
        <end position="70"/>
    </location>
</feature>
<feature type="transmembrane region" description="Helical" evidence="1">
    <location>
        <begin position="102"/>
        <end position="122"/>
    </location>
</feature>
<feature type="transmembrane region" description="Helical" evidence="1">
    <location>
        <begin position="135"/>
        <end position="155"/>
    </location>
</feature>
<feature type="transmembrane region" description="Helical" evidence="1">
    <location>
        <begin position="172"/>
        <end position="192"/>
    </location>
</feature>
<feature type="transmembrane region" description="Helical" evidence="1">
    <location>
        <begin position="214"/>
        <end position="234"/>
    </location>
</feature>
<feature type="transmembrane region" description="Helical" evidence="1">
    <location>
        <begin position="251"/>
        <end position="271"/>
    </location>
</feature>
<feature type="transmembrane region" description="Helical" evidence="1">
    <location>
        <begin position="284"/>
        <end position="304"/>
    </location>
</feature>
<feature type="transmembrane region" description="Helical" evidence="1">
    <location>
        <begin position="340"/>
        <end position="360"/>
    </location>
</feature>
<feature type="transmembrane region" description="Helical" evidence="1">
    <location>
        <begin position="369"/>
        <end position="389"/>
    </location>
</feature>
<feature type="transmembrane region" description="Helical" evidence="1">
    <location>
        <begin position="397"/>
        <end position="417"/>
    </location>
</feature>
<feature type="transmembrane region" description="Helical" evidence="1">
    <location>
        <begin position="422"/>
        <end position="442"/>
    </location>
</feature>
<comment type="function">
    <text evidence="1">Transport of potassium into the cell. Likely operates as a K(+):H(+) symporter.</text>
</comment>
<comment type="catalytic activity">
    <reaction evidence="1">
        <text>K(+)(in) + H(+)(in) = K(+)(out) + H(+)(out)</text>
        <dbReference type="Rhea" id="RHEA:28490"/>
        <dbReference type="ChEBI" id="CHEBI:15378"/>
        <dbReference type="ChEBI" id="CHEBI:29103"/>
    </reaction>
    <physiologicalReaction direction="right-to-left" evidence="1">
        <dbReference type="Rhea" id="RHEA:28492"/>
    </physiologicalReaction>
</comment>
<comment type="subcellular location">
    <subcellularLocation>
        <location evidence="1">Cell inner membrane</location>
        <topology evidence="1">Multi-pass membrane protein</topology>
    </subcellularLocation>
</comment>
<comment type="similarity">
    <text evidence="1">Belongs to the HAK/KUP transporter (TC 2.A.72) family.</text>
</comment>
<reference key="1">
    <citation type="journal article" date="2007" name="PLoS Genet.">
        <title>A tale of two oxidation states: bacterial colonization of arsenic-rich environments.</title>
        <authorList>
            <person name="Muller D."/>
            <person name="Medigue C."/>
            <person name="Koechler S."/>
            <person name="Barbe V."/>
            <person name="Barakat M."/>
            <person name="Talla E."/>
            <person name="Bonnefoy V."/>
            <person name="Krin E."/>
            <person name="Arsene-Ploetze F."/>
            <person name="Carapito C."/>
            <person name="Chandler M."/>
            <person name="Cournoyer B."/>
            <person name="Cruveiller S."/>
            <person name="Dossat C."/>
            <person name="Duval S."/>
            <person name="Heymann M."/>
            <person name="Leize E."/>
            <person name="Lieutaud A."/>
            <person name="Lievremont D."/>
            <person name="Makita Y."/>
            <person name="Mangenot S."/>
            <person name="Nitschke W."/>
            <person name="Ortet P."/>
            <person name="Perdrial N."/>
            <person name="Schoepp B."/>
            <person name="Siguier P."/>
            <person name="Simeonova D.D."/>
            <person name="Rouy Z."/>
            <person name="Segurens B."/>
            <person name="Turlin E."/>
            <person name="Vallenet D."/>
            <person name="van Dorsselaer A."/>
            <person name="Weiss S."/>
            <person name="Weissenbach J."/>
            <person name="Lett M.-C."/>
            <person name="Danchin A."/>
            <person name="Bertin P.N."/>
        </authorList>
    </citation>
    <scope>NUCLEOTIDE SEQUENCE [LARGE SCALE GENOMIC DNA]</scope>
    <source>
        <strain>ULPAs1</strain>
    </source>
</reference>
<protein>
    <recommendedName>
        <fullName evidence="1">Probable potassium transport system protein Kup</fullName>
    </recommendedName>
</protein>
<dbReference type="EMBL" id="CU207211">
    <property type="protein sequence ID" value="CAL63414.2"/>
    <property type="molecule type" value="Genomic_DNA"/>
</dbReference>
<dbReference type="SMR" id="A4GA77"/>
<dbReference type="STRING" id="204773.HEAR3308"/>
<dbReference type="KEGG" id="har:HEAR3308"/>
<dbReference type="eggNOG" id="COG3158">
    <property type="taxonomic scope" value="Bacteria"/>
</dbReference>
<dbReference type="HOGENOM" id="CLU_008142_4_2_4"/>
<dbReference type="OrthoDB" id="9805577at2"/>
<dbReference type="Proteomes" id="UP000006697">
    <property type="component" value="Chromosome"/>
</dbReference>
<dbReference type="GO" id="GO:0005886">
    <property type="term" value="C:plasma membrane"/>
    <property type="evidence" value="ECO:0007669"/>
    <property type="project" value="UniProtKB-SubCell"/>
</dbReference>
<dbReference type="GO" id="GO:0015079">
    <property type="term" value="F:potassium ion transmembrane transporter activity"/>
    <property type="evidence" value="ECO:0007669"/>
    <property type="project" value="UniProtKB-UniRule"/>
</dbReference>
<dbReference type="GO" id="GO:0015293">
    <property type="term" value="F:symporter activity"/>
    <property type="evidence" value="ECO:0007669"/>
    <property type="project" value="UniProtKB-UniRule"/>
</dbReference>
<dbReference type="HAMAP" id="MF_01522">
    <property type="entry name" value="Kup"/>
    <property type="match status" value="1"/>
</dbReference>
<dbReference type="InterPro" id="IPR003855">
    <property type="entry name" value="K+_transporter"/>
</dbReference>
<dbReference type="InterPro" id="IPR053952">
    <property type="entry name" value="K_trans_C"/>
</dbReference>
<dbReference type="InterPro" id="IPR053951">
    <property type="entry name" value="K_trans_N"/>
</dbReference>
<dbReference type="InterPro" id="IPR023051">
    <property type="entry name" value="Kup"/>
</dbReference>
<dbReference type="PANTHER" id="PTHR30540:SF79">
    <property type="entry name" value="LOW AFFINITY POTASSIUM TRANSPORT SYSTEM PROTEIN KUP"/>
    <property type="match status" value="1"/>
</dbReference>
<dbReference type="PANTHER" id="PTHR30540">
    <property type="entry name" value="OSMOTIC STRESS POTASSIUM TRANSPORTER"/>
    <property type="match status" value="1"/>
</dbReference>
<dbReference type="Pfam" id="PF02705">
    <property type="entry name" value="K_trans"/>
    <property type="match status" value="1"/>
</dbReference>
<dbReference type="Pfam" id="PF22776">
    <property type="entry name" value="K_trans_C"/>
    <property type="match status" value="1"/>
</dbReference>
<organism>
    <name type="scientific">Herminiimonas arsenicoxydans</name>
    <dbReference type="NCBI Taxonomy" id="204773"/>
    <lineage>
        <taxon>Bacteria</taxon>
        <taxon>Pseudomonadati</taxon>
        <taxon>Pseudomonadota</taxon>
        <taxon>Betaproteobacteria</taxon>
        <taxon>Burkholderiales</taxon>
        <taxon>Oxalobacteraceae</taxon>
        <taxon>Herminiimonas</taxon>
    </lineage>
</organism>
<accession>A4GA77</accession>
<gene>
    <name evidence="1" type="primary">kup</name>
    <name type="ordered locus">HEAR3308</name>
</gene>
<sequence>MASPDKKSSLAALTLAAVGIVYGDIGTSPLYTMKEVFSKEHGLDLTPENLLGVVSLIVWGLIIIVSLKYVTLVLRANNRGEGGIMALMALALSSVTKNSRWYFPLMVMGLFGATLFYGDSVITPAISVLSAVEGLGVATSAFDPYVVPVTVAILVGLYSLQARGTAGIGKWFGPVMLIWFITLAVMGVVNIIDAPYILHALNPWHALHFLSGNGFLAFIALGAVVLAFTGAEALYADMGHFGAKPIRMAWFLIAFPALSLNYLGQGALLLLNPEAVTNPFYQQLGAWSIYPLVALSTMAAIIASQATISGTFSMTKQAIALGFLPRMKIEFTSASQIGQIYIPAVNWLQMIVVVLAVIGFGSSSNLAAAYGIAVTATMMVTTVLTFFVIRYRWKYNLILCVAATGFFLVIDLSLFSANMLKLFHGGWFPLLLGVVLFTLMLTWKRGRELVFENLQKHAIPLEDFLASLFISPPTRVPGTAIFLRGESDGVPHAMLHNLSHNKVLHERVVFLTVRMMEVPYVPKADQVRIEHLGDDCYQMNVTYGFKNVPDIPAALDLAKEQGLEFEMMETSFFIARQTVVANPVRGMALWREHIFVAMSRHARGAADYYQIPSNRVIELGTKVEI</sequence>
<proteinExistence type="inferred from homology"/>
<keyword id="KW-0997">Cell inner membrane</keyword>
<keyword id="KW-1003">Cell membrane</keyword>
<keyword id="KW-0406">Ion transport</keyword>
<keyword id="KW-0472">Membrane</keyword>
<keyword id="KW-0630">Potassium</keyword>
<keyword id="KW-0633">Potassium transport</keyword>
<keyword id="KW-1185">Reference proteome</keyword>
<keyword id="KW-0769">Symport</keyword>
<keyword id="KW-0812">Transmembrane</keyword>
<keyword id="KW-1133">Transmembrane helix</keyword>
<keyword id="KW-0813">Transport</keyword>
<name>KUP_HERAR</name>